<proteinExistence type="inferred from homology"/>
<keyword id="KW-0963">Cytoplasm</keyword>
<keyword id="KW-0378">Hydrolase</keyword>
<keyword id="KW-0540">Nuclease</keyword>
<keyword id="KW-0690">Ribosome biogenesis</keyword>
<organism>
    <name type="scientific">Staphylococcus aureus (strain bovine RF122 / ET3-1)</name>
    <dbReference type="NCBI Taxonomy" id="273036"/>
    <lineage>
        <taxon>Bacteria</taxon>
        <taxon>Bacillati</taxon>
        <taxon>Bacillota</taxon>
        <taxon>Bacilli</taxon>
        <taxon>Bacillales</taxon>
        <taxon>Staphylococcaceae</taxon>
        <taxon>Staphylococcus</taxon>
    </lineage>
</organism>
<evidence type="ECO:0000255" key="1">
    <source>
        <dbReference type="HAMAP-Rule" id="MF_00651"/>
    </source>
</evidence>
<reference key="1">
    <citation type="journal article" date="2007" name="PLoS ONE">
        <title>Molecular correlates of host specialization in Staphylococcus aureus.</title>
        <authorList>
            <person name="Herron-Olson L."/>
            <person name="Fitzgerald J.R."/>
            <person name="Musser J.M."/>
            <person name="Kapur V."/>
        </authorList>
    </citation>
    <scope>NUCLEOTIDE SEQUENCE [LARGE SCALE GENOMIC DNA]</scope>
    <source>
        <strain>bovine RF122 / ET3-1</strain>
    </source>
</reference>
<accession>Q2YT62</accession>
<protein>
    <recommendedName>
        <fullName evidence="1">Putative pre-16S rRNA nuclease</fullName>
        <ecNumber evidence="1">3.1.-.-</ecNumber>
    </recommendedName>
</protein>
<sequence length="142" mass="15879">MLQHKILGLDVGSRTVGIAISDIMGWTAQGLDTLRINEENNELGIDQLVDIIKKHNVGTVVIGLPKNMNNSIGFRGEASLTYKEKLLEAYPSIEIVMWDERLSTMAAERSLLEADVSRQKRKQLIDKMAAVFILQGYLDSLH</sequence>
<feature type="chain" id="PRO_0000257594" description="Putative pre-16S rRNA nuclease">
    <location>
        <begin position="1"/>
        <end position="142"/>
    </location>
</feature>
<comment type="function">
    <text evidence="1">Could be a nuclease involved in processing of the 5'-end of pre-16S rRNA.</text>
</comment>
<comment type="subcellular location">
    <subcellularLocation>
        <location evidence="1">Cytoplasm</location>
    </subcellularLocation>
</comment>
<comment type="similarity">
    <text evidence="1">Belongs to the YqgF nuclease family.</text>
</comment>
<gene>
    <name type="ordered locus">SAB1487c</name>
</gene>
<dbReference type="EC" id="3.1.-.-" evidence="1"/>
<dbReference type="EMBL" id="AJ938182">
    <property type="protein sequence ID" value="CAI81176.1"/>
    <property type="molecule type" value="Genomic_DNA"/>
</dbReference>
<dbReference type="RefSeq" id="WP_000939058.1">
    <property type="nucleotide sequence ID" value="NC_007622.1"/>
</dbReference>
<dbReference type="SMR" id="Q2YT62"/>
<dbReference type="KEGG" id="sab:SAB1487c"/>
<dbReference type="HOGENOM" id="CLU_098240_2_0_9"/>
<dbReference type="GO" id="GO:0005829">
    <property type="term" value="C:cytosol"/>
    <property type="evidence" value="ECO:0007669"/>
    <property type="project" value="TreeGrafter"/>
</dbReference>
<dbReference type="GO" id="GO:0004518">
    <property type="term" value="F:nuclease activity"/>
    <property type="evidence" value="ECO:0007669"/>
    <property type="project" value="UniProtKB-KW"/>
</dbReference>
<dbReference type="GO" id="GO:0000967">
    <property type="term" value="P:rRNA 5'-end processing"/>
    <property type="evidence" value="ECO:0007669"/>
    <property type="project" value="UniProtKB-UniRule"/>
</dbReference>
<dbReference type="CDD" id="cd16964">
    <property type="entry name" value="YqgF"/>
    <property type="match status" value="1"/>
</dbReference>
<dbReference type="FunFam" id="3.30.420.140:FF:000003">
    <property type="entry name" value="Putative pre-16S rRNA nuclease"/>
    <property type="match status" value="1"/>
</dbReference>
<dbReference type="Gene3D" id="3.30.420.140">
    <property type="entry name" value="YqgF/RNase H-like domain"/>
    <property type="match status" value="1"/>
</dbReference>
<dbReference type="HAMAP" id="MF_00651">
    <property type="entry name" value="Nuclease_YqgF"/>
    <property type="match status" value="1"/>
</dbReference>
<dbReference type="InterPro" id="IPR012337">
    <property type="entry name" value="RNaseH-like_sf"/>
</dbReference>
<dbReference type="InterPro" id="IPR005227">
    <property type="entry name" value="YqgF"/>
</dbReference>
<dbReference type="InterPro" id="IPR006641">
    <property type="entry name" value="YqgF/RNaseH-like_dom"/>
</dbReference>
<dbReference type="InterPro" id="IPR037027">
    <property type="entry name" value="YqgF/RNaseH-like_dom_sf"/>
</dbReference>
<dbReference type="NCBIfam" id="TIGR00250">
    <property type="entry name" value="RNAse_H_YqgF"/>
    <property type="match status" value="1"/>
</dbReference>
<dbReference type="PANTHER" id="PTHR33317">
    <property type="entry name" value="POLYNUCLEOTIDYL TRANSFERASE, RIBONUCLEASE H-LIKE SUPERFAMILY PROTEIN"/>
    <property type="match status" value="1"/>
</dbReference>
<dbReference type="PANTHER" id="PTHR33317:SF4">
    <property type="entry name" value="POLYNUCLEOTIDYL TRANSFERASE, RIBONUCLEASE H-LIKE SUPERFAMILY PROTEIN"/>
    <property type="match status" value="1"/>
</dbReference>
<dbReference type="Pfam" id="PF03652">
    <property type="entry name" value="RuvX"/>
    <property type="match status" value="1"/>
</dbReference>
<dbReference type="SMART" id="SM00732">
    <property type="entry name" value="YqgFc"/>
    <property type="match status" value="1"/>
</dbReference>
<dbReference type="SUPFAM" id="SSF53098">
    <property type="entry name" value="Ribonuclease H-like"/>
    <property type="match status" value="1"/>
</dbReference>
<name>YQGF_STAAB</name>